<sequence>MKTKLNELLEFPTPFTYKVMGQALPELVDQVVEVVQRHAPGDYTPTVKPSSKGNYHSVSITINATHIEQVETLYEELGKIDIVRMVL</sequence>
<comment type="similarity">
    <text evidence="1">Belongs to the UPF0250 family.</text>
</comment>
<proteinExistence type="inferred from homology"/>
<name>YBED_SHIDS</name>
<organism>
    <name type="scientific">Shigella dysenteriae serotype 1 (strain Sd197)</name>
    <dbReference type="NCBI Taxonomy" id="300267"/>
    <lineage>
        <taxon>Bacteria</taxon>
        <taxon>Pseudomonadati</taxon>
        <taxon>Pseudomonadota</taxon>
        <taxon>Gammaproteobacteria</taxon>
        <taxon>Enterobacterales</taxon>
        <taxon>Enterobacteriaceae</taxon>
        <taxon>Shigella</taxon>
    </lineage>
</organism>
<gene>
    <name evidence="1" type="primary">ybeD</name>
    <name type="ordered locus">SDY_0553</name>
</gene>
<protein>
    <recommendedName>
        <fullName evidence="1">UPF0250 protein YbeD</fullName>
    </recommendedName>
</protein>
<feature type="chain" id="PRO_1000061900" description="UPF0250 protein YbeD">
    <location>
        <begin position="1"/>
        <end position="87"/>
    </location>
</feature>
<evidence type="ECO:0000255" key="1">
    <source>
        <dbReference type="HAMAP-Rule" id="MF_00659"/>
    </source>
</evidence>
<keyword id="KW-1185">Reference proteome</keyword>
<dbReference type="EMBL" id="CP000034">
    <property type="protein sequence ID" value="ABB60758.1"/>
    <property type="molecule type" value="Genomic_DNA"/>
</dbReference>
<dbReference type="RefSeq" id="WP_000850550.1">
    <property type="nucleotide sequence ID" value="NC_007606.1"/>
</dbReference>
<dbReference type="RefSeq" id="YP_402247.1">
    <property type="nucleotide sequence ID" value="NC_007606.1"/>
</dbReference>
<dbReference type="SMR" id="Q32IU9"/>
<dbReference type="STRING" id="300267.SDY_0553"/>
<dbReference type="EnsemblBacteria" id="ABB60758">
    <property type="protein sequence ID" value="ABB60758"/>
    <property type="gene ID" value="SDY_0553"/>
</dbReference>
<dbReference type="GeneID" id="93776851"/>
<dbReference type="KEGG" id="sdy:SDY_0553"/>
<dbReference type="PATRIC" id="fig|300267.13.peg.654"/>
<dbReference type="HOGENOM" id="CLU_161438_2_1_6"/>
<dbReference type="Proteomes" id="UP000002716">
    <property type="component" value="Chromosome"/>
</dbReference>
<dbReference type="GO" id="GO:0005829">
    <property type="term" value="C:cytosol"/>
    <property type="evidence" value="ECO:0007669"/>
    <property type="project" value="TreeGrafter"/>
</dbReference>
<dbReference type="FunFam" id="3.30.70.260:FF:000002">
    <property type="entry name" value="UPF0250 protein YbeD"/>
    <property type="match status" value="1"/>
</dbReference>
<dbReference type="Gene3D" id="3.30.70.260">
    <property type="match status" value="1"/>
</dbReference>
<dbReference type="HAMAP" id="MF_00659">
    <property type="entry name" value="UPF0250"/>
    <property type="match status" value="1"/>
</dbReference>
<dbReference type="InterPro" id="IPR007454">
    <property type="entry name" value="UPF0250_YbeD-like"/>
</dbReference>
<dbReference type="InterPro" id="IPR027471">
    <property type="entry name" value="YbeD-like_sf"/>
</dbReference>
<dbReference type="NCBIfam" id="NF003447">
    <property type="entry name" value="PRK04998.1"/>
    <property type="match status" value="1"/>
</dbReference>
<dbReference type="PANTHER" id="PTHR38036">
    <property type="entry name" value="UPF0250 PROTEIN YBED"/>
    <property type="match status" value="1"/>
</dbReference>
<dbReference type="PANTHER" id="PTHR38036:SF1">
    <property type="entry name" value="UPF0250 PROTEIN YBED"/>
    <property type="match status" value="1"/>
</dbReference>
<dbReference type="Pfam" id="PF04359">
    <property type="entry name" value="DUF493"/>
    <property type="match status" value="1"/>
</dbReference>
<dbReference type="SUPFAM" id="SSF117991">
    <property type="entry name" value="YbeD/HP0495-like"/>
    <property type="match status" value="1"/>
</dbReference>
<reference key="1">
    <citation type="journal article" date="2005" name="Nucleic Acids Res.">
        <title>Genome dynamics and diversity of Shigella species, the etiologic agents of bacillary dysentery.</title>
        <authorList>
            <person name="Yang F."/>
            <person name="Yang J."/>
            <person name="Zhang X."/>
            <person name="Chen L."/>
            <person name="Jiang Y."/>
            <person name="Yan Y."/>
            <person name="Tang X."/>
            <person name="Wang J."/>
            <person name="Xiong Z."/>
            <person name="Dong J."/>
            <person name="Xue Y."/>
            <person name="Zhu Y."/>
            <person name="Xu X."/>
            <person name="Sun L."/>
            <person name="Chen S."/>
            <person name="Nie H."/>
            <person name="Peng J."/>
            <person name="Xu J."/>
            <person name="Wang Y."/>
            <person name="Yuan Z."/>
            <person name="Wen Y."/>
            <person name="Yao Z."/>
            <person name="Shen Y."/>
            <person name="Qiang B."/>
            <person name="Hou Y."/>
            <person name="Yu J."/>
            <person name="Jin Q."/>
        </authorList>
    </citation>
    <scope>NUCLEOTIDE SEQUENCE [LARGE SCALE GENOMIC DNA]</scope>
    <source>
        <strain>Sd197</strain>
    </source>
</reference>
<accession>Q32IU9</accession>